<accession>A4VZV9</accession>
<organism>
    <name type="scientific">Streptococcus suis (strain 98HAH33)</name>
    <dbReference type="NCBI Taxonomy" id="391296"/>
    <lineage>
        <taxon>Bacteria</taxon>
        <taxon>Bacillati</taxon>
        <taxon>Bacillota</taxon>
        <taxon>Bacilli</taxon>
        <taxon>Lactobacillales</taxon>
        <taxon>Streptococcaceae</taxon>
        <taxon>Streptococcus</taxon>
    </lineage>
</organism>
<keyword id="KW-0028">Amino-acid biosynthesis</keyword>
<keyword id="KW-0368">Histidine biosynthesis</keyword>
<keyword id="KW-0378">Hydrolase</keyword>
<keyword id="KW-0486">Methionine biosynthesis</keyword>
<keyword id="KW-0511">Multifunctional enzyme</keyword>
<keyword id="KW-0521">NADP</keyword>
<keyword id="KW-0554">One-carbon metabolism</keyword>
<keyword id="KW-0560">Oxidoreductase</keyword>
<keyword id="KW-0658">Purine biosynthesis</keyword>
<feature type="chain" id="PRO_0000305886" description="Bifunctional protein FolD">
    <location>
        <begin position="1"/>
        <end position="282"/>
    </location>
</feature>
<feature type="binding site" evidence="1">
    <location>
        <begin position="164"/>
        <end position="166"/>
    </location>
    <ligand>
        <name>NADP(+)</name>
        <dbReference type="ChEBI" id="CHEBI:58349"/>
    </ligand>
</feature>
<feature type="binding site" evidence="1">
    <location>
        <position position="189"/>
    </location>
    <ligand>
        <name>NADP(+)</name>
        <dbReference type="ChEBI" id="CHEBI:58349"/>
    </ligand>
</feature>
<sequence length="282" mass="30603">MTVIDGKALGVKLQAALAEKTARLKEEKGLVPGLVVILVGENPASQVYVRNKERSALAAGFKSEVVRVPDTISESDLLDLIERYNQDDEWHGILVQLPLPAHISEEKVLLAIDPDKDVDGLHPTNMGKFWSGHPVMIPSTPAGIMEMFKEYQIELEGKSALVIGRSNIVGKPMAQLLLDADATVTIAHSRTKNLPDLARQADIVVVAIGRGHFVTKEFVKLGAVVIDVGMNRDENGKLIGDVKYDEVSEVASYITPVPGGVGPMTITMLMEQTYEACVRSAK</sequence>
<reference key="1">
    <citation type="journal article" date="2007" name="PLoS ONE">
        <title>A glimpse of streptococcal toxic shock syndrome from comparative genomics of S. suis 2 Chinese isolates.</title>
        <authorList>
            <person name="Chen C."/>
            <person name="Tang J."/>
            <person name="Dong W."/>
            <person name="Wang C."/>
            <person name="Feng Y."/>
            <person name="Wang J."/>
            <person name="Zheng F."/>
            <person name="Pan X."/>
            <person name="Liu D."/>
            <person name="Li M."/>
            <person name="Song Y."/>
            <person name="Zhu X."/>
            <person name="Sun H."/>
            <person name="Feng T."/>
            <person name="Guo Z."/>
            <person name="Ju A."/>
            <person name="Ge J."/>
            <person name="Dong Y."/>
            <person name="Sun W."/>
            <person name="Jiang Y."/>
            <person name="Wang J."/>
            <person name="Yan J."/>
            <person name="Yang H."/>
            <person name="Wang X."/>
            <person name="Gao G.F."/>
            <person name="Yang R."/>
            <person name="Wang J."/>
            <person name="Yu J."/>
        </authorList>
    </citation>
    <scope>NUCLEOTIDE SEQUENCE [LARGE SCALE GENOMIC DNA]</scope>
    <source>
        <strain>98HAH33</strain>
    </source>
</reference>
<evidence type="ECO:0000255" key="1">
    <source>
        <dbReference type="HAMAP-Rule" id="MF_01576"/>
    </source>
</evidence>
<comment type="function">
    <text evidence="1">Catalyzes the oxidation of 5,10-methylenetetrahydrofolate to 5,10-methenyltetrahydrofolate and then the hydrolysis of 5,10-methenyltetrahydrofolate to 10-formyltetrahydrofolate.</text>
</comment>
<comment type="catalytic activity">
    <reaction evidence="1">
        <text>(6R)-5,10-methylene-5,6,7,8-tetrahydrofolate + NADP(+) = (6R)-5,10-methenyltetrahydrofolate + NADPH</text>
        <dbReference type="Rhea" id="RHEA:22812"/>
        <dbReference type="ChEBI" id="CHEBI:15636"/>
        <dbReference type="ChEBI" id="CHEBI:57455"/>
        <dbReference type="ChEBI" id="CHEBI:57783"/>
        <dbReference type="ChEBI" id="CHEBI:58349"/>
        <dbReference type="EC" id="1.5.1.5"/>
    </reaction>
</comment>
<comment type="catalytic activity">
    <reaction evidence="1">
        <text>(6R)-5,10-methenyltetrahydrofolate + H2O = (6R)-10-formyltetrahydrofolate + H(+)</text>
        <dbReference type="Rhea" id="RHEA:23700"/>
        <dbReference type="ChEBI" id="CHEBI:15377"/>
        <dbReference type="ChEBI" id="CHEBI:15378"/>
        <dbReference type="ChEBI" id="CHEBI:57455"/>
        <dbReference type="ChEBI" id="CHEBI:195366"/>
        <dbReference type="EC" id="3.5.4.9"/>
    </reaction>
</comment>
<comment type="pathway">
    <text evidence="1">One-carbon metabolism; tetrahydrofolate interconversion.</text>
</comment>
<comment type="subunit">
    <text evidence="1">Homodimer.</text>
</comment>
<comment type="similarity">
    <text evidence="1">Belongs to the tetrahydrofolate dehydrogenase/cyclohydrolase family.</text>
</comment>
<proteinExistence type="inferred from homology"/>
<gene>
    <name evidence="1" type="primary">folD</name>
    <name type="ordered locus">SSU98_0490</name>
</gene>
<dbReference type="EC" id="1.5.1.5" evidence="1"/>
<dbReference type="EC" id="3.5.4.9" evidence="1"/>
<dbReference type="EMBL" id="CP000408">
    <property type="protein sequence ID" value="ABP91648.1"/>
    <property type="molecule type" value="Genomic_DNA"/>
</dbReference>
<dbReference type="SMR" id="A4VZV9"/>
<dbReference type="KEGG" id="ssv:SSU98_0490"/>
<dbReference type="HOGENOM" id="CLU_034045_2_1_9"/>
<dbReference type="UniPathway" id="UPA00193"/>
<dbReference type="GO" id="GO:0005829">
    <property type="term" value="C:cytosol"/>
    <property type="evidence" value="ECO:0007669"/>
    <property type="project" value="TreeGrafter"/>
</dbReference>
<dbReference type="GO" id="GO:0004477">
    <property type="term" value="F:methenyltetrahydrofolate cyclohydrolase activity"/>
    <property type="evidence" value="ECO:0007669"/>
    <property type="project" value="UniProtKB-UniRule"/>
</dbReference>
<dbReference type="GO" id="GO:0004488">
    <property type="term" value="F:methylenetetrahydrofolate dehydrogenase (NADP+) activity"/>
    <property type="evidence" value="ECO:0007669"/>
    <property type="project" value="UniProtKB-UniRule"/>
</dbReference>
<dbReference type="GO" id="GO:0000105">
    <property type="term" value="P:L-histidine biosynthetic process"/>
    <property type="evidence" value="ECO:0007669"/>
    <property type="project" value="UniProtKB-KW"/>
</dbReference>
<dbReference type="GO" id="GO:0009086">
    <property type="term" value="P:methionine biosynthetic process"/>
    <property type="evidence" value="ECO:0007669"/>
    <property type="project" value="UniProtKB-KW"/>
</dbReference>
<dbReference type="GO" id="GO:0006164">
    <property type="term" value="P:purine nucleotide biosynthetic process"/>
    <property type="evidence" value="ECO:0007669"/>
    <property type="project" value="UniProtKB-KW"/>
</dbReference>
<dbReference type="GO" id="GO:0035999">
    <property type="term" value="P:tetrahydrofolate interconversion"/>
    <property type="evidence" value="ECO:0007669"/>
    <property type="project" value="UniProtKB-UniRule"/>
</dbReference>
<dbReference type="CDD" id="cd01080">
    <property type="entry name" value="NAD_bind_m-THF_DH_Cyclohyd"/>
    <property type="match status" value="1"/>
</dbReference>
<dbReference type="FunFam" id="3.40.50.720:FF:000094">
    <property type="entry name" value="Bifunctional protein FolD"/>
    <property type="match status" value="1"/>
</dbReference>
<dbReference type="FunFam" id="3.40.50.10860:FF:000005">
    <property type="entry name" value="C-1-tetrahydrofolate synthase, cytoplasmic, putative"/>
    <property type="match status" value="1"/>
</dbReference>
<dbReference type="Gene3D" id="3.40.50.10860">
    <property type="entry name" value="Leucine Dehydrogenase, chain A, domain 1"/>
    <property type="match status" value="1"/>
</dbReference>
<dbReference type="Gene3D" id="3.40.50.720">
    <property type="entry name" value="NAD(P)-binding Rossmann-like Domain"/>
    <property type="match status" value="1"/>
</dbReference>
<dbReference type="HAMAP" id="MF_01576">
    <property type="entry name" value="THF_DHG_CYH"/>
    <property type="match status" value="1"/>
</dbReference>
<dbReference type="InterPro" id="IPR046346">
    <property type="entry name" value="Aminoacid_DH-like_N_sf"/>
</dbReference>
<dbReference type="InterPro" id="IPR036291">
    <property type="entry name" value="NAD(P)-bd_dom_sf"/>
</dbReference>
<dbReference type="InterPro" id="IPR000672">
    <property type="entry name" value="THF_DH/CycHdrlase"/>
</dbReference>
<dbReference type="InterPro" id="IPR020630">
    <property type="entry name" value="THF_DH/CycHdrlase_cat_dom"/>
</dbReference>
<dbReference type="InterPro" id="IPR020867">
    <property type="entry name" value="THF_DH/CycHdrlase_CS"/>
</dbReference>
<dbReference type="InterPro" id="IPR020631">
    <property type="entry name" value="THF_DH/CycHdrlase_NAD-bd_dom"/>
</dbReference>
<dbReference type="NCBIfam" id="NF010776">
    <property type="entry name" value="PRK14179.1"/>
    <property type="match status" value="1"/>
</dbReference>
<dbReference type="NCBIfam" id="NF010783">
    <property type="entry name" value="PRK14186.1"/>
    <property type="match status" value="1"/>
</dbReference>
<dbReference type="PANTHER" id="PTHR48099:SF5">
    <property type="entry name" value="C-1-TETRAHYDROFOLATE SYNTHASE, CYTOPLASMIC"/>
    <property type="match status" value="1"/>
</dbReference>
<dbReference type="PANTHER" id="PTHR48099">
    <property type="entry name" value="C-1-TETRAHYDROFOLATE SYNTHASE, CYTOPLASMIC-RELATED"/>
    <property type="match status" value="1"/>
</dbReference>
<dbReference type="Pfam" id="PF00763">
    <property type="entry name" value="THF_DHG_CYH"/>
    <property type="match status" value="1"/>
</dbReference>
<dbReference type="Pfam" id="PF02882">
    <property type="entry name" value="THF_DHG_CYH_C"/>
    <property type="match status" value="1"/>
</dbReference>
<dbReference type="PRINTS" id="PR00085">
    <property type="entry name" value="THFDHDRGNASE"/>
</dbReference>
<dbReference type="SUPFAM" id="SSF53223">
    <property type="entry name" value="Aminoacid dehydrogenase-like, N-terminal domain"/>
    <property type="match status" value="1"/>
</dbReference>
<dbReference type="SUPFAM" id="SSF51735">
    <property type="entry name" value="NAD(P)-binding Rossmann-fold domains"/>
    <property type="match status" value="1"/>
</dbReference>
<dbReference type="PROSITE" id="PS00766">
    <property type="entry name" value="THF_DHG_CYH_1"/>
    <property type="match status" value="1"/>
</dbReference>
<dbReference type="PROSITE" id="PS00767">
    <property type="entry name" value="THF_DHG_CYH_2"/>
    <property type="match status" value="1"/>
</dbReference>
<name>FOLD_STRS2</name>
<protein>
    <recommendedName>
        <fullName evidence="1">Bifunctional protein FolD</fullName>
    </recommendedName>
    <domain>
        <recommendedName>
            <fullName evidence="1">Methylenetetrahydrofolate dehydrogenase</fullName>
            <ecNumber evidence="1">1.5.1.5</ecNumber>
        </recommendedName>
    </domain>
    <domain>
        <recommendedName>
            <fullName evidence="1">Methenyltetrahydrofolate cyclohydrolase</fullName>
            <ecNumber evidence="1">3.5.4.9</ecNumber>
        </recommendedName>
    </domain>
</protein>